<protein>
    <recommendedName>
        <fullName evidence="1">3-methyl-2-oxobutanoate hydroxymethyltransferase</fullName>
        <ecNumber evidence="1">2.1.2.11</ecNumber>
    </recommendedName>
    <alternativeName>
        <fullName evidence="1">Ketopantoate hydroxymethyltransferase</fullName>
        <shortName evidence="1">KPHMT</shortName>
    </alternativeName>
</protein>
<sequence length="278" mass="30457">MKTKTDFLKMKEQGEPITMLTAYDYPSAKLAEEAEVDMILVGDSLGMVVLGYDSTVPVTVEDMIHHTKAVRRGAKETFIVTDMPFMSYHVSPQDTMVNARRIVQESGAHALKVEGAGEVISTIHYLTSAGIPVVAHLGLTPQSVGVLGGYKVQGKDAESAKKLIEDAKRCEEAGAIALVLECVPMQLAEFISKQLTIPTIGIGAGQKVDGQVLVYHDLISYGVNRVPKFVKQYTFVQEEIVRGISQYVTEVKTGQFPEEKHSFTMKEEECLALYGGKQ</sequence>
<keyword id="KW-0963">Cytoplasm</keyword>
<keyword id="KW-0460">Magnesium</keyword>
<keyword id="KW-0479">Metal-binding</keyword>
<keyword id="KW-0566">Pantothenate biosynthesis</keyword>
<keyword id="KW-0808">Transferase</keyword>
<accession>Q73AV4</accession>
<reference key="1">
    <citation type="journal article" date="2004" name="Nucleic Acids Res.">
        <title>The genome sequence of Bacillus cereus ATCC 10987 reveals metabolic adaptations and a large plasmid related to Bacillus anthracis pXO1.</title>
        <authorList>
            <person name="Rasko D.A."/>
            <person name="Ravel J."/>
            <person name="Oekstad O.A."/>
            <person name="Helgason E."/>
            <person name="Cer R.Z."/>
            <person name="Jiang L."/>
            <person name="Shores K.A."/>
            <person name="Fouts D.E."/>
            <person name="Tourasse N.J."/>
            <person name="Angiuoli S.V."/>
            <person name="Kolonay J.F."/>
            <person name="Nelson W.C."/>
            <person name="Kolstoe A.-B."/>
            <person name="Fraser C.M."/>
            <person name="Read T.D."/>
        </authorList>
    </citation>
    <scope>NUCLEOTIDE SEQUENCE [LARGE SCALE GENOMIC DNA]</scope>
    <source>
        <strain>ATCC 10987 / NRS 248</strain>
    </source>
</reference>
<proteinExistence type="inferred from homology"/>
<feature type="chain" id="PRO_0000184809" description="3-methyl-2-oxobutanoate hydroxymethyltransferase">
    <location>
        <begin position="1"/>
        <end position="278"/>
    </location>
</feature>
<feature type="active site" description="Proton acceptor" evidence="1">
    <location>
        <position position="181"/>
    </location>
</feature>
<feature type="binding site" evidence="1">
    <location>
        <begin position="43"/>
        <end position="44"/>
    </location>
    <ligand>
        <name>3-methyl-2-oxobutanoate</name>
        <dbReference type="ChEBI" id="CHEBI:11851"/>
    </ligand>
</feature>
<feature type="binding site" evidence="1">
    <location>
        <position position="43"/>
    </location>
    <ligand>
        <name>Mg(2+)</name>
        <dbReference type="ChEBI" id="CHEBI:18420"/>
    </ligand>
</feature>
<feature type="binding site" evidence="1">
    <location>
        <position position="82"/>
    </location>
    <ligand>
        <name>3-methyl-2-oxobutanoate</name>
        <dbReference type="ChEBI" id="CHEBI:11851"/>
    </ligand>
</feature>
<feature type="binding site" evidence="1">
    <location>
        <position position="82"/>
    </location>
    <ligand>
        <name>Mg(2+)</name>
        <dbReference type="ChEBI" id="CHEBI:18420"/>
    </ligand>
</feature>
<feature type="binding site" evidence="1">
    <location>
        <position position="112"/>
    </location>
    <ligand>
        <name>3-methyl-2-oxobutanoate</name>
        <dbReference type="ChEBI" id="CHEBI:11851"/>
    </ligand>
</feature>
<feature type="binding site" evidence="1">
    <location>
        <position position="114"/>
    </location>
    <ligand>
        <name>Mg(2+)</name>
        <dbReference type="ChEBI" id="CHEBI:18420"/>
    </ligand>
</feature>
<dbReference type="EC" id="2.1.2.11" evidence="1"/>
<dbReference type="EMBL" id="AE017194">
    <property type="protein sequence ID" value="AAS40597.1"/>
    <property type="molecule type" value="Genomic_DNA"/>
</dbReference>
<dbReference type="SMR" id="Q73AV4"/>
<dbReference type="KEGG" id="bca:BCE_1668"/>
<dbReference type="HOGENOM" id="CLU_036645_1_0_9"/>
<dbReference type="UniPathway" id="UPA00028">
    <property type="reaction ID" value="UER00003"/>
</dbReference>
<dbReference type="Proteomes" id="UP000002527">
    <property type="component" value="Chromosome"/>
</dbReference>
<dbReference type="GO" id="GO:0005737">
    <property type="term" value="C:cytoplasm"/>
    <property type="evidence" value="ECO:0007669"/>
    <property type="project" value="UniProtKB-SubCell"/>
</dbReference>
<dbReference type="GO" id="GO:0003864">
    <property type="term" value="F:3-methyl-2-oxobutanoate hydroxymethyltransferase activity"/>
    <property type="evidence" value="ECO:0007669"/>
    <property type="project" value="UniProtKB-UniRule"/>
</dbReference>
<dbReference type="GO" id="GO:0000287">
    <property type="term" value="F:magnesium ion binding"/>
    <property type="evidence" value="ECO:0007669"/>
    <property type="project" value="TreeGrafter"/>
</dbReference>
<dbReference type="GO" id="GO:0015940">
    <property type="term" value="P:pantothenate biosynthetic process"/>
    <property type="evidence" value="ECO:0007669"/>
    <property type="project" value="UniProtKB-UniRule"/>
</dbReference>
<dbReference type="CDD" id="cd06557">
    <property type="entry name" value="KPHMT-like"/>
    <property type="match status" value="1"/>
</dbReference>
<dbReference type="FunFam" id="3.20.20.60:FF:000003">
    <property type="entry name" value="3-methyl-2-oxobutanoate hydroxymethyltransferase"/>
    <property type="match status" value="1"/>
</dbReference>
<dbReference type="Gene3D" id="3.20.20.60">
    <property type="entry name" value="Phosphoenolpyruvate-binding domains"/>
    <property type="match status" value="1"/>
</dbReference>
<dbReference type="HAMAP" id="MF_00156">
    <property type="entry name" value="PanB"/>
    <property type="match status" value="1"/>
</dbReference>
<dbReference type="InterPro" id="IPR003700">
    <property type="entry name" value="Pantoate_hydroxy_MeTrfase"/>
</dbReference>
<dbReference type="InterPro" id="IPR015813">
    <property type="entry name" value="Pyrv/PenolPyrv_kinase-like_dom"/>
</dbReference>
<dbReference type="InterPro" id="IPR040442">
    <property type="entry name" value="Pyrv_kinase-like_dom_sf"/>
</dbReference>
<dbReference type="NCBIfam" id="TIGR00222">
    <property type="entry name" value="panB"/>
    <property type="match status" value="1"/>
</dbReference>
<dbReference type="NCBIfam" id="NF001452">
    <property type="entry name" value="PRK00311.1"/>
    <property type="match status" value="1"/>
</dbReference>
<dbReference type="PANTHER" id="PTHR20881">
    <property type="entry name" value="3-METHYL-2-OXOBUTANOATE HYDROXYMETHYLTRANSFERASE"/>
    <property type="match status" value="1"/>
</dbReference>
<dbReference type="PANTHER" id="PTHR20881:SF0">
    <property type="entry name" value="3-METHYL-2-OXOBUTANOATE HYDROXYMETHYLTRANSFERASE"/>
    <property type="match status" value="1"/>
</dbReference>
<dbReference type="Pfam" id="PF02548">
    <property type="entry name" value="Pantoate_transf"/>
    <property type="match status" value="1"/>
</dbReference>
<dbReference type="PIRSF" id="PIRSF000388">
    <property type="entry name" value="Pantoate_hydroxy_MeTrfase"/>
    <property type="match status" value="1"/>
</dbReference>
<dbReference type="SUPFAM" id="SSF51621">
    <property type="entry name" value="Phosphoenolpyruvate/pyruvate domain"/>
    <property type="match status" value="1"/>
</dbReference>
<evidence type="ECO:0000255" key="1">
    <source>
        <dbReference type="HAMAP-Rule" id="MF_00156"/>
    </source>
</evidence>
<name>PANB_BACC1</name>
<gene>
    <name evidence="1" type="primary">panB</name>
    <name type="ordered locus">BCE_1668</name>
</gene>
<organism>
    <name type="scientific">Bacillus cereus (strain ATCC 10987 / NRS 248)</name>
    <dbReference type="NCBI Taxonomy" id="222523"/>
    <lineage>
        <taxon>Bacteria</taxon>
        <taxon>Bacillati</taxon>
        <taxon>Bacillota</taxon>
        <taxon>Bacilli</taxon>
        <taxon>Bacillales</taxon>
        <taxon>Bacillaceae</taxon>
        <taxon>Bacillus</taxon>
        <taxon>Bacillus cereus group</taxon>
    </lineage>
</organism>
<comment type="function">
    <text evidence="1">Catalyzes the reversible reaction in which hydroxymethyl group from 5,10-methylenetetrahydrofolate is transferred onto alpha-ketoisovalerate to form ketopantoate.</text>
</comment>
<comment type="catalytic activity">
    <reaction evidence="1">
        <text>3-methyl-2-oxobutanoate + (6R)-5,10-methylene-5,6,7,8-tetrahydrofolate + H2O = 2-dehydropantoate + (6S)-5,6,7,8-tetrahydrofolate</text>
        <dbReference type="Rhea" id="RHEA:11824"/>
        <dbReference type="ChEBI" id="CHEBI:11561"/>
        <dbReference type="ChEBI" id="CHEBI:11851"/>
        <dbReference type="ChEBI" id="CHEBI:15377"/>
        <dbReference type="ChEBI" id="CHEBI:15636"/>
        <dbReference type="ChEBI" id="CHEBI:57453"/>
        <dbReference type="EC" id="2.1.2.11"/>
    </reaction>
</comment>
<comment type="cofactor">
    <cofactor evidence="1">
        <name>Mg(2+)</name>
        <dbReference type="ChEBI" id="CHEBI:18420"/>
    </cofactor>
    <text evidence="1">Binds 1 Mg(2+) ion per subunit.</text>
</comment>
<comment type="pathway">
    <text evidence="1">Cofactor biosynthesis; (R)-pantothenate biosynthesis; (R)-pantoate from 3-methyl-2-oxobutanoate: step 1/2.</text>
</comment>
<comment type="subunit">
    <text evidence="1">Homodecamer; pentamer of dimers.</text>
</comment>
<comment type="subcellular location">
    <subcellularLocation>
        <location evidence="1">Cytoplasm</location>
    </subcellularLocation>
</comment>
<comment type="similarity">
    <text evidence="1">Belongs to the PanB family.</text>
</comment>